<protein>
    <recommendedName>
        <fullName evidence="2">Glutathione synthetase</fullName>
        <ecNumber evidence="2">6.3.2.3</ecNumber>
    </recommendedName>
    <alternativeName>
        <fullName evidence="2">GSH synthetase</fullName>
        <shortName evidence="2">GSH-S</shortName>
        <shortName evidence="2">GSHase</shortName>
    </alternativeName>
    <alternativeName>
        <fullName evidence="2">Glutathione synthase</fullName>
    </alternativeName>
</protein>
<dbReference type="EC" id="6.3.2.3" evidence="2"/>
<dbReference type="EMBL" id="BA000040">
    <property type="protein sequence ID" value="BAC45933.1"/>
    <property type="molecule type" value="Genomic_DNA"/>
</dbReference>
<dbReference type="RefSeq" id="NP_767308.1">
    <property type="nucleotide sequence ID" value="NC_004463.1"/>
</dbReference>
<dbReference type="RefSeq" id="WP_011083495.1">
    <property type="nucleotide sequence ID" value="NC_004463.1"/>
</dbReference>
<dbReference type="SMR" id="Q89WL0"/>
<dbReference type="FunCoup" id="Q89WL0">
    <property type="interactions" value="313"/>
</dbReference>
<dbReference type="STRING" id="224911.AAV28_00175"/>
<dbReference type="EnsemblBacteria" id="BAC45933">
    <property type="protein sequence ID" value="BAC45933"/>
    <property type="gene ID" value="BAC45933"/>
</dbReference>
<dbReference type="GeneID" id="46487941"/>
<dbReference type="KEGG" id="bja:bll0668"/>
<dbReference type="PATRIC" id="fig|224911.44.peg.37"/>
<dbReference type="eggNOG" id="COG0189">
    <property type="taxonomic scope" value="Bacteria"/>
</dbReference>
<dbReference type="HOGENOM" id="CLU_068239_0_0_5"/>
<dbReference type="InParanoid" id="Q89WL0"/>
<dbReference type="OrthoDB" id="9785415at2"/>
<dbReference type="PhylomeDB" id="Q89WL0"/>
<dbReference type="UniPathway" id="UPA00142">
    <property type="reaction ID" value="UER00210"/>
</dbReference>
<dbReference type="Proteomes" id="UP000002526">
    <property type="component" value="Chromosome"/>
</dbReference>
<dbReference type="GO" id="GO:0005737">
    <property type="term" value="C:cytoplasm"/>
    <property type="evidence" value="ECO:0000318"/>
    <property type="project" value="GO_Central"/>
</dbReference>
<dbReference type="GO" id="GO:0005524">
    <property type="term" value="F:ATP binding"/>
    <property type="evidence" value="ECO:0007669"/>
    <property type="project" value="UniProtKB-UniRule"/>
</dbReference>
<dbReference type="GO" id="GO:0004363">
    <property type="term" value="F:glutathione synthase activity"/>
    <property type="evidence" value="ECO:0000318"/>
    <property type="project" value="GO_Central"/>
</dbReference>
<dbReference type="GO" id="GO:0046872">
    <property type="term" value="F:metal ion binding"/>
    <property type="evidence" value="ECO:0007669"/>
    <property type="project" value="UniProtKB-KW"/>
</dbReference>
<dbReference type="FunFam" id="3.30.1490.20:FF:000009">
    <property type="entry name" value="Glutathione synthetase"/>
    <property type="match status" value="1"/>
</dbReference>
<dbReference type="Gene3D" id="3.40.50.20">
    <property type="match status" value="1"/>
</dbReference>
<dbReference type="Gene3D" id="3.30.1490.20">
    <property type="entry name" value="ATP-grasp fold, A domain"/>
    <property type="match status" value="1"/>
</dbReference>
<dbReference type="Gene3D" id="3.30.470.20">
    <property type="entry name" value="ATP-grasp fold, B domain"/>
    <property type="match status" value="1"/>
</dbReference>
<dbReference type="HAMAP" id="MF_00162">
    <property type="entry name" value="GSH_S"/>
    <property type="match status" value="1"/>
</dbReference>
<dbReference type="InterPro" id="IPR011761">
    <property type="entry name" value="ATP-grasp"/>
</dbReference>
<dbReference type="InterPro" id="IPR013815">
    <property type="entry name" value="ATP_grasp_subdomain_1"/>
</dbReference>
<dbReference type="InterPro" id="IPR006284">
    <property type="entry name" value="Glut_synth_pro"/>
</dbReference>
<dbReference type="InterPro" id="IPR004218">
    <property type="entry name" value="GSHS_ATP-bd"/>
</dbReference>
<dbReference type="InterPro" id="IPR004215">
    <property type="entry name" value="GSHS_N"/>
</dbReference>
<dbReference type="InterPro" id="IPR016185">
    <property type="entry name" value="PreATP-grasp_dom_sf"/>
</dbReference>
<dbReference type="NCBIfam" id="TIGR01380">
    <property type="entry name" value="glut_syn"/>
    <property type="match status" value="1"/>
</dbReference>
<dbReference type="NCBIfam" id="NF003573">
    <property type="entry name" value="PRK05246.1"/>
    <property type="match status" value="1"/>
</dbReference>
<dbReference type="PANTHER" id="PTHR21621:SF4">
    <property type="entry name" value="GLUTATHIONE SYNTHETASE"/>
    <property type="match status" value="1"/>
</dbReference>
<dbReference type="PANTHER" id="PTHR21621">
    <property type="entry name" value="RIBOSOMAL PROTEIN S6 MODIFICATION PROTEIN"/>
    <property type="match status" value="1"/>
</dbReference>
<dbReference type="Pfam" id="PF02955">
    <property type="entry name" value="GSH-S_ATP"/>
    <property type="match status" value="1"/>
</dbReference>
<dbReference type="Pfam" id="PF02951">
    <property type="entry name" value="GSH-S_N"/>
    <property type="match status" value="1"/>
</dbReference>
<dbReference type="SUPFAM" id="SSF56059">
    <property type="entry name" value="Glutathione synthetase ATP-binding domain-like"/>
    <property type="match status" value="1"/>
</dbReference>
<dbReference type="SUPFAM" id="SSF52440">
    <property type="entry name" value="PreATP-grasp domain"/>
    <property type="match status" value="1"/>
</dbReference>
<dbReference type="PROSITE" id="PS50975">
    <property type="entry name" value="ATP_GRASP"/>
    <property type="match status" value="1"/>
</dbReference>
<gene>
    <name evidence="2" type="primary">gshB</name>
    <name type="ordered locus">bll0668</name>
</gene>
<evidence type="ECO:0000250" key="1"/>
<evidence type="ECO:0000255" key="2">
    <source>
        <dbReference type="HAMAP-Rule" id="MF_00162"/>
    </source>
</evidence>
<accession>Q89WL0</accession>
<keyword id="KW-0067">ATP-binding</keyword>
<keyword id="KW-0317">Glutathione biosynthesis</keyword>
<keyword id="KW-0436">Ligase</keyword>
<keyword id="KW-0460">Magnesium</keyword>
<keyword id="KW-0464">Manganese</keyword>
<keyword id="KW-0479">Metal-binding</keyword>
<keyword id="KW-0547">Nucleotide-binding</keyword>
<keyword id="KW-1185">Reference proteome</keyword>
<feature type="chain" id="PRO_0000197456" description="Glutathione synthetase">
    <location>
        <begin position="1"/>
        <end position="314"/>
    </location>
</feature>
<feature type="domain" description="ATP-grasp" evidence="2">
    <location>
        <begin position="125"/>
        <end position="309"/>
    </location>
</feature>
<feature type="binding site" evidence="2">
    <location>
        <begin position="151"/>
        <end position="207"/>
    </location>
    <ligand>
        <name>ATP</name>
        <dbReference type="ChEBI" id="CHEBI:30616"/>
    </ligand>
</feature>
<feature type="binding site" evidence="2">
    <location>
        <position position="280"/>
    </location>
    <ligand>
        <name>Mg(2+)</name>
        <dbReference type="ChEBI" id="CHEBI:18420"/>
    </ligand>
</feature>
<feature type="binding site" evidence="2">
    <location>
        <position position="282"/>
    </location>
    <ligand>
        <name>Mg(2+)</name>
        <dbReference type="ChEBI" id="CHEBI:18420"/>
    </ligand>
</feature>
<comment type="catalytic activity">
    <reaction evidence="2">
        <text>gamma-L-glutamyl-L-cysteine + glycine + ATP = glutathione + ADP + phosphate + H(+)</text>
        <dbReference type="Rhea" id="RHEA:13557"/>
        <dbReference type="ChEBI" id="CHEBI:15378"/>
        <dbReference type="ChEBI" id="CHEBI:30616"/>
        <dbReference type="ChEBI" id="CHEBI:43474"/>
        <dbReference type="ChEBI" id="CHEBI:57305"/>
        <dbReference type="ChEBI" id="CHEBI:57925"/>
        <dbReference type="ChEBI" id="CHEBI:58173"/>
        <dbReference type="ChEBI" id="CHEBI:456216"/>
        <dbReference type="EC" id="6.3.2.3"/>
    </reaction>
</comment>
<comment type="cofactor">
    <cofactor evidence="1">
        <name>Mg(2+)</name>
        <dbReference type="ChEBI" id="CHEBI:18420"/>
    </cofactor>
    <cofactor evidence="1">
        <name>Mn(2+)</name>
        <dbReference type="ChEBI" id="CHEBI:29035"/>
    </cofactor>
    <text evidence="1">Binds 1 Mg(2+) or Mn(2+) ion per subunit.</text>
</comment>
<comment type="pathway">
    <text evidence="2">Sulfur metabolism; glutathione biosynthesis; glutathione from L-cysteine and L-glutamate: step 2/2.</text>
</comment>
<comment type="similarity">
    <text evidence="2">Belongs to the prokaryotic GSH synthase family.</text>
</comment>
<proteinExistence type="inferred from homology"/>
<reference key="1">
    <citation type="journal article" date="2002" name="DNA Res.">
        <title>Complete genomic sequence of nitrogen-fixing symbiotic bacterium Bradyrhizobium japonicum USDA110.</title>
        <authorList>
            <person name="Kaneko T."/>
            <person name="Nakamura Y."/>
            <person name="Sato S."/>
            <person name="Minamisawa K."/>
            <person name="Uchiumi T."/>
            <person name="Sasamoto S."/>
            <person name="Watanabe A."/>
            <person name="Idesawa K."/>
            <person name="Iriguchi M."/>
            <person name="Kawashima K."/>
            <person name="Kohara M."/>
            <person name="Matsumoto M."/>
            <person name="Shimpo S."/>
            <person name="Tsuruoka H."/>
            <person name="Wada T."/>
            <person name="Yamada M."/>
            <person name="Tabata S."/>
        </authorList>
    </citation>
    <scope>NUCLEOTIDE SEQUENCE [LARGE SCALE GENOMIC DNA]</scope>
    <source>
        <strain>JCM 10833 / BCRC 13528 / IAM 13628 / NBRC 14792 / USDA 110</strain>
    </source>
</reference>
<name>GSHB_BRADU</name>
<sequence>MKLNVAVQMDPIARINIKGDSTFALLLEAQKRGHGLSYYTPDKLSMIGEELVAPVQLLTVRDEPGDHFTLGEPKREALNGFDVVLLRQDPPFDLAYITSTHFLERIHPKTLVVNDPASVRNAPEKLFVMNFPQLMPPTLISRDLDEINAFRDKHGAVVMKPLHGHGGAAVFRVMPQDMNFGSLFDMFTVTFKEPWVIQQFIPEVKHGDKRIILVNGEFAGAVNRVPAADDLRSNMVRGGAAQETELTPREREICATVGPALRERGLLFVGIDVINGNLTEINVTSPTGIRAIARLGGPDVAAKVWDTIEQKRAK</sequence>
<organism>
    <name type="scientific">Bradyrhizobium diazoefficiens (strain JCM 10833 / BCRC 13528 / IAM 13628 / NBRC 14792 / USDA 110)</name>
    <dbReference type="NCBI Taxonomy" id="224911"/>
    <lineage>
        <taxon>Bacteria</taxon>
        <taxon>Pseudomonadati</taxon>
        <taxon>Pseudomonadota</taxon>
        <taxon>Alphaproteobacteria</taxon>
        <taxon>Hyphomicrobiales</taxon>
        <taxon>Nitrobacteraceae</taxon>
        <taxon>Bradyrhizobium</taxon>
    </lineage>
</organism>